<gene>
    <name type="primary">CSN3</name>
    <name type="synonym">CSN10</name>
    <name type="synonym">CSNK</name>
</gene>
<organism>
    <name type="scientific">Bison bonasus</name>
    <name type="common">European bison</name>
    <dbReference type="NCBI Taxonomy" id="9902"/>
    <lineage>
        <taxon>Eukaryota</taxon>
        <taxon>Metazoa</taxon>
        <taxon>Chordata</taxon>
        <taxon>Craniata</taxon>
        <taxon>Vertebrata</taxon>
        <taxon>Euteleostomi</taxon>
        <taxon>Mammalia</taxon>
        <taxon>Eutheria</taxon>
        <taxon>Laurasiatheria</taxon>
        <taxon>Artiodactyla</taxon>
        <taxon>Ruminantia</taxon>
        <taxon>Pecora</taxon>
        <taxon>Bovidae</taxon>
        <taxon>Bovinae</taxon>
        <taxon>Bison</taxon>
    </lineage>
</organism>
<sequence length="136" mass="14904">RYPSYGLNYYQQKPVALINNQFLPYPYYAKPAAVRSPAQILQWQVLSNTVPAKSCQAQPTTMARHPHPHLSFMAIPPKKNQDKTEIPTINTIASGEPTSTPTTEAVESTVATLEASPEVIESPPEINTVQVTSTAV</sequence>
<accession>P42155</accession>
<proteinExistence type="evidence at transcript level"/>
<comment type="function">
    <text>Kappa-casein stabilizes micelle formation, preventing casein precipitation in milk.</text>
</comment>
<comment type="subcellular location">
    <subcellularLocation>
        <location>Secreted</location>
    </subcellularLocation>
</comment>
<comment type="tissue specificity">
    <text>Mammary gland specific. Secreted in milk.</text>
</comment>
<comment type="similarity">
    <text evidence="4">Belongs to the kappa-casein family.</text>
</comment>
<keyword id="KW-0325">Glycoprotein</keyword>
<keyword id="KW-0494">Milk protein</keyword>
<keyword id="KW-0597">Phosphoprotein</keyword>
<keyword id="KW-0964">Secreted</keyword>
<reference key="1">
    <citation type="journal article" date="1995" name="Anim. Genet.">
        <title>Genotyping of Bison bonasus kappa-casein gene following DNA sequence amplification.</title>
        <authorList>
            <person name="Burzynska B."/>
            <person name="Topczewski J."/>
        </authorList>
    </citation>
    <scope>NUCLEOTIDE SEQUENCE [GENOMIC DNA]</scope>
    <source>
        <strain>Bialowieza</strain>
    </source>
</reference>
<feature type="chain" id="PRO_0000144103" description="Kappa-casein">
    <location>
        <begin position="1" status="less than"/>
        <end position="136"/>
    </location>
</feature>
<feature type="site" description="Cleavage; by chymosin/rennin" evidence="1">
    <location>
        <begin position="72"/>
        <end position="73"/>
    </location>
</feature>
<feature type="modified residue" description="Phosphoserine" evidence="2">
    <location>
        <position position="94"/>
    </location>
</feature>
<feature type="modified residue" description="Phosphothreonine" evidence="2">
    <location>
        <position position="112"/>
    </location>
</feature>
<feature type="modified residue" description="Phosphoserine; alternate" evidence="2">
    <location>
        <position position="116"/>
    </location>
</feature>
<feature type="modified residue" description="Phosphoserine" evidence="3">
    <location>
        <position position="133"/>
    </location>
</feature>
<feature type="glycosylation site" description="O-linked (GalNAc...) threonine" evidence="2">
    <location>
        <position position="88"/>
    </location>
</feature>
<feature type="glycosylation site" description="O-linked (GalNAc...) threonine" evidence="2">
    <location>
        <position position="98"/>
    </location>
</feature>
<feature type="glycosylation site" description="O-linked (GalNAc...) serine" evidence="2">
    <location>
        <position position="99"/>
    </location>
</feature>
<feature type="glycosylation site" description="O-linked (GalNAc...) threonine" evidence="2">
    <location>
        <position position="103"/>
    </location>
</feature>
<feature type="glycosylation site" description="O-linked (GalNAc...) threonine" evidence="2">
    <location>
        <position position="109"/>
    </location>
</feature>
<feature type="glycosylation site" description="O-linked (GalNAc...) serine; alternate" evidence="2">
    <location>
        <position position="116"/>
    </location>
</feature>
<feature type="glycosylation site" description="O-linked (GalNAc...) threonine" evidence="2">
    <location>
        <position position="132"/>
    </location>
</feature>
<feature type="sequence variant">
    <original>T</original>
    <variation>A</variation>
    <location>
        <position position="98"/>
    </location>
</feature>
<feature type="non-terminal residue">
    <location>
        <position position="1"/>
    </location>
</feature>
<protein>
    <recommendedName>
        <fullName>Kappa-casein</fullName>
    </recommendedName>
</protein>
<name>CASK_BISBO</name>
<dbReference type="EMBL" id="U10379">
    <property type="protein sequence ID" value="AAB60267.1"/>
    <property type="molecule type" value="Genomic_DNA"/>
</dbReference>
<dbReference type="GlyCosmos" id="P42155">
    <property type="glycosylation" value="7 sites, No reported glycans"/>
</dbReference>
<dbReference type="GO" id="GO:0005615">
    <property type="term" value="C:extracellular space"/>
    <property type="evidence" value="ECO:0007669"/>
    <property type="project" value="TreeGrafter"/>
</dbReference>
<dbReference type="GO" id="GO:0007595">
    <property type="term" value="P:lactation"/>
    <property type="evidence" value="ECO:0007669"/>
    <property type="project" value="TreeGrafter"/>
</dbReference>
<dbReference type="GO" id="GO:0050821">
    <property type="term" value="P:protein stabilization"/>
    <property type="evidence" value="ECO:0007669"/>
    <property type="project" value="TreeGrafter"/>
</dbReference>
<dbReference type="InterPro" id="IPR000117">
    <property type="entry name" value="Casein_kappa"/>
</dbReference>
<dbReference type="PANTHER" id="PTHR11470">
    <property type="entry name" value="KAPPA CASEIN"/>
    <property type="match status" value="1"/>
</dbReference>
<dbReference type="PANTHER" id="PTHR11470:SF2">
    <property type="entry name" value="KAPPA-CASEIN"/>
    <property type="match status" value="1"/>
</dbReference>
<dbReference type="Pfam" id="PF00997">
    <property type="entry name" value="Casein_kappa"/>
    <property type="match status" value="1"/>
</dbReference>
<evidence type="ECO:0000250" key="1"/>
<evidence type="ECO:0000250" key="2">
    <source>
        <dbReference type="UniProtKB" id="P02668"/>
    </source>
</evidence>
<evidence type="ECO:0000250" key="3">
    <source>
        <dbReference type="UniProtKB" id="P02670"/>
    </source>
</evidence>
<evidence type="ECO:0000305" key="4"/>